<organism>
    <name type="scientific">Dichelobacter nodosus</name>
    <name type="common">Bacteroides nodosus</name>
    <dbReference type="NCBI Taxonomy" id="870"/>
    <lineage>
        <taxon>Bacteria</taxon>
        <taxon>Pseudomonadati</taxon>
        <taxon>Pseudomonadota</taxon>
        <taxon>Gammaproteobacteria</taxon>
        <taxon>Cardiobacteriales</taxon>
        <taxon>Cardiobacteriaceae</taxon>
        <taxon>Dichelobacter</taxon>
    </lineage>
</organism>
<keyword id="KW-0067">ATP-binding</keyword>
<keyword id="KW-0173">Coenzyme A biosynthesis</keyword>
<keyword id="KW-0963">Cytoplasm</keyword>
<keyword id="KW-0418">Kinase</keyword>
<keyword id="KW-0547">Nucleotide-binding</keyword>
<keyword id="KW-0808">Transferase</keyword>
<evidence type="ECO:0000255" key="1">
    <source>
        <dbReference type="HAMAP-Rule" id="MF_00376"/>
    </source>
</evidence>
<evidence type="ECO:0000305" key="2"/>
<gene>
    <name evidence="1" type="primary">coaE</name>
</gene>
<reference key="1">
    <citation type="journal article" date="1995" name="Gene">
        <title>Identification of fimbrial assembly genes from Dichelobacter nodosus: evidence that fimP encodes the type-IV prepilin peptidase.</title>
        <authorList>
            <person name="Johnston J.L."/>
            <person name="Billington S.J."/>
            <person name="Haring V."/>
            <person name="Rood J.I."/>
        </authorList>
    </citation>
    <scope>NUCLEOTIDE SEQUENCE [GENOMIC DNA]</scope>
    <source>
        <strain>A198</strain>
    </source>
</reference>
<proteinExistence type="inferred from homology"/>
<name>COAE_DICNO</name>
<protein>
    <recommendedName>
        <fullName evidence="1">Dephospho-CoA kinase</fullName>
        <ecNumber evidence="1">2.7.1.24</ecNumber>
    </recommendedName>
    <alternativeName>
        <fullName evidence="1">Dephosphocoenzyme A kinase</fullName>
    </alternativeName>
</protein>
<sequence length="197" mass="22161">MIVGLTGGIASGKTLCCNWFAAQGCYIIDADLIAKELVTVGGVVWLQLRAHFGETIFYADGNLNRALLREKMFHNQEIKEKVNQIFHPAVRAEIEKRIHLYPHAFTLLDVPLLFETQLHKICHMVIVVDIPVSLQIARGVCRDGVNSAQMQRIIASQISREKRLSLANFIIDNSNSIAQTYQQCQQIYQQILSLNAA</sequence>
<dbReference type="EC" id="2.7.1.24" evidence="1"/>
<dbReference type="EMBL" id="U17138">
    <property type="protein sequence ID" value="AAB65808.1"/>
    <property type="molecule type" value="Genomic_DNA"/>
</dbReference>
<dbReference type="RefSeq" id="WP_012031427.1">
    <property type="nucleotide sequence ID" value="NZ_LGVW01000028.1"/>
</dbReference>
<dbReference type="SMR" id="Q46526"/>
<dbReference type="PATRIC" id="fig|870.4.peg.1002"/>
<dbReference type="OMA" id="CQMDIEQ"/>
<dbReference type="UniPathway" id="UPA00241">
    <property type="reaction ID" value="UER00356"/>
</dbReference>
<dbReference type="GO" id="GO:0005737">
    <property type="term" value="C:cytoplasm"/>
    <property type="evidence" value="ECO:0007669"/>
    <property type="project" value="UniProtKB-SubCell"/>
</dbReference>
<dbReference type="GO" id="GO:0005524">
    <property type="term" value="F:ATP binding"/>
    <property type="evidence" value="ECO:0007669"/>
    <property type="project" value="UniProtKB-UniRule"/>
</dbReference>
<dbReference type="GO" id="GO:0004140">
    <property type="term" value="F:dephospho-CoA kinase activity"/>
    <property type="evidence" value="ECO:0007669"/>
    <property type="project" value="UniProtKB-UniRule"/>
</dbReference>
<dbReference type="GO" id="GO:0015937">
    <property type="term" value="P:coenzyme A biosynthetic process"/>
    <property type="evidence" value="ECO:0007669"/>
    <property type="project" value="UniProtKB-UniRule"/>
</dbReference>
<dbReference type="CDD" id="cd02022">
    <property type="entry name" value="DPCK"/>
    <property type="match status" value="1"/>
</dbReference>
<dbReference type="Gene3D" id="3.40.50.300">
    <property type="entry name" value="P-loop containing nucleotide triphosphate hydrolases"/>
    <property type="match status" value="1"/>
</dbReference>
<dbReference type="HAMAP" id="MF_00376">
    <property type="entry name" value="Dephospho_CoA_kinase"/>
    <property type="match status" value="1"/>
</dbReference>
<dbReference type="InterPro" id="IPR001977">
    <property type="entry name" value="Depp_CoAkinase"/>
</dbReference>
<dbReference type="InterPro" id="IPR027417">
    <property type="entry name" value="P-loop_NTPase"/>
</dbReference>
<dbReference type="NCBIfam" id="TIGR00152">
    <property type="entry name" value="dephospho-CoA kinase"/>
    <property type="match status" value="1"/>
</dbReference>
<dbReference type="PANTHER" id="PTHR10695:SF46">
    <property type="entry name" value="BIFUNCTIONAL COENZYME A SYNTHASE-RELATED"/>
    <property type="match status" value="1"/>
</dbReference>
<dbReference type="PANTHER" id="PTHR10695">
    <property type="entry name" value="DEPHOSPHO-COA KINASE-RELATED"/>
    <property type="match status" value="1"/>
</dbReference>
<dbReference type="Pfam" id="PF01121">
    <property type="entry name" value="CoaE"/>
    <property type="match status" value="1"/>
</dbReference>
<dbReference type="SUPFAM" id="SSF52540">
    <property type="entry name" value="P-loop containing nucleoside triphosphate hydrolases"/>
    <property type="match status" value="1"/>
</dbReference>
<dbReference type="PROSITE" id="PS51219">
    <property type="entry name" value="DPCK"/>
    <property type="match status" value="1"/>
</dbReference>
<comment type="function">
    <text evidence="1">Catalyzes the phosphorylation of the 3'-hydroxyl group of dephosphocoenzyme A to form coenzyme A.</text>
</comment>
<comment type="catalytic activity">
    <reaction evidence="1">
        <text>3'-dephospho-CoA + ATP = ADP + CoA + H(+)</text>
        <dbReference type="Rhea" id="RHEA:18245"/>
        <dbReference type="ChEBI" id="CHEBI:15378"/>
        <dbReference type="ChEBI" id="CHEBI:30616"/>
        <dbReference type="ChEBI" id="CHEBI:57287"/>
        <dbReference type="ChEBI" id="CHEBI:57328"/>
        <dbReference type="ChEBI" id="CHEBI:456216"/>
        <dbReference type="EC" id="2.7.1.24"/>
    </reaction>
</comment>
<comment type="pathway">
    <text evidence="1">Cofactor biosynthesis; coenzyme A biosynthesis; CoA from (R)-pantothenate: step 5/5.</text>
</comment>
<comment type="subcellular location">
    <subcellularLocation>
        <location evidence="1">Cytoplasm</location>
    </subcellularLocation>
</comment>
<comment type="similarity">
    <text evidence="1 2">Belongs to the CoaE family.</text>
</comment>
<feature type="chain" id="PRO_0000172905" description="Dephospho-CoA kinase">
    <location>
        <begin position="1"/>
        <end position="197"/>
    </location>
</feature>
<feature type="domain" description="DPCK" evidence="1">
    <location>
        <begin position="2"/>
        <end position="197"/>
    </location>
</feature>
<feature type="binding site" evidence="1">
    <location>
        <begin position="10"/>
        <end position="15"/>
    </location>
    <ligand>
        <name>ATP</name>
        <dbReference type="ChEBI" id="CHEBI:30616"/>
    </ligand>
</feature>
<accession>Q46526</accession>